<sequence length="100" mass="10880">MIPLQHGLILAAILFVLGLTGLLIRRNLLFMLISLEVMINAAALAFVVAGSYWGQADGQVMYILAITLAAAEASIGLALLLQLYRRRHTLDIDTVSEMRG</sequence>
<feature type="chain" id="PRO_0000390287" description="NADH-quinone oxidoreductase subunit K">
    <location>
        <begin position="1"/>
        <end position="100"/>
    </location>
</feature>
<feature type="transmembrane region" description="Helical" evidence="1">
    <location>
        <begin position="4"/>
        <end position="24"/>
    </location>
</feature>
<feature type="transmembrane region" description="Helical" evidence="1">
    <location>
        <begin position="28"/>
        <end position="48"/>
    </location>
</feature>
<feature type="transmembrane region" description="Helical" evidence="1">
    <location>
        <begin position="60"/>
        <end position="80"/>
    </location>
</feature>
<dbReference type="EC" id="7.1.1.-" evidence="1"/>
<dbReference type="EMBL" id="CP000305">
    <property type="protein sequence ID" value="ABG18470.1"/>
    <property type="molecule type" value="Genomic_DNA"/>
</dbReference>
<dbReference type="EMBL" id="ACNQ01000013">
    <property type="protein sequence ID" value="EEO76193.1"/>
    <property type="molecule type" value="Genomic_DNA"/>
</dbReference>
<dbReference type="RefSeq" id="WP_002210271.1">
    <property type="nucleotide sequence ID" value="NZ_ACNQ01000013.1"/>
</dbReference>
<dbReference type="SMR" id="Q1CHR0"/>
<dbReference type="GeneID" id="96666077"/>
<dbReference type="KEGG" id="ypn:YPN_2141"/>
<dbReference type="HOGENOM" id="CLU_144724_0_1_6"/>
<dbReference type="Proteomes" id="UP000008936">
    <property type="component" value="Chromosome"/>
</dbReference>
<dbReference type="GO" id="GO:0030964">
    <property type="term" value="C:NADH dehydrogenase complex"/>
    <property type="evidence" value="ECO:0007669"/>
    <property type="project" value="TreeGrafter"/>
</dbReference>
<dbReference type="GO" id="GO:0005886">
    <property type="term" value="C:plasma membrane"/>
    <property type="evidence" value="ECO:0007669"/>
    <property type="project" value="UniProtKB-SubCell"/>
</dbReference>
<dbReference type="GO" id="GO:0050136">
    <property type="term" value="F:NADH:ubiquinone reductase (non-electrogenic) activity"/>
    <property type="evidence" value="ECO:0007669"/>
    <property type="project" value="UniProtKB-UniRule"/>
</dbReference>
<dbReference type="GO" id="GO:0048038">
    <property type="term" value="F:quinone binding"/>
    <property type="evidence" value="ECO:0007669"/>
    <property type="project" value="UniProtKB-KW"/>
</dbReference>
<dbReference type="GO" id="GO:0042773">
    <property type="term" value="P:ATP synthesis coupled electron transport"/>
    <property type="evidence" value="ECO:0007669"/>
    <property type="project" value="InterPro"/>
</dbReference>
<dbReference type="FunFam" id="1.10.287.3510:FF:000001">
    <property type="entry name" value="NADH-quinone oxidoreductase subunit K"/>
    <property type="match status" value="1"/>
</dbReference>
<dbReference type="Gene3D" id="1.10.287.3510">
    <property type="match status" value="1"/>
</dbReference>
<dbReference type="HAMAP" id="MF_01456">
    <property type="entry name" value="NDH1_NuoK"/>
    <property type="match status" value="1"/>
</dbReference>
<dbReference type="InterPro" id="IPR001133">
    <property type="entry name" value="NADH_UbQ_OxRdtase_chain4L/K"/>
</dbReference>
<dbReference type="InterPro" id="IPR039428">
    <property type="entry name" value="NUOK/Mnh_C1-like"/>
</dbReference>
<dbReference type="NCBIfam" id="NF004319">
    <property type="entry name" value="PRK05715.1-1"/>
    <property type="match status" value="1"/>
</dbReference>
<dbReference type="NCBIfam" id="NF004320">
    <property type="entry name" value="PRK05715.1-2"/>
    <property type="match status" value="1"/>
</dbReference>
<dbReference type="PANTHER" id="PTHR11434:SF16">
    <property type="entry name" value="NADH-UBIQUINONE OXIDOREDUCTASE CHAIN 4L"/>
    <property type="match status" value="1"/>
</dbReference>
<dbReference type="PANTHER" id="PTHR11434">
    <property type="entry name" value="NADH-UBIQUINONE OXIDOREDUCTASE SUBUNIT ND4L"/>
    <property type="match status" value="1"/>
</dbReference>
<dbReference type="Pfam" id="PF00420">
    <property type="entry name" value="Oxidored_q2"/>
    <property type="match status" value="1"/>
</dbReference>
<reference key="1">
    <citation type="journal article" date="2006" name="J. Bacteriol.">
        <title>Complete genome sequence of Yersinia pestis strains Antiqua and Nepal516: evidence of gene reduction in an emerging pathogen.</title>
        <authorList>
            <person name="Chain P.S.G."/>
            <person name="Hu P."/>
            <person name="Malfatti S.A."/>
            <person name="Radnedge L."/>
            <person name="Larimer F."/>
            <person name="Vergez L.M."/>
            <person name="Worsham P."/>
            <person name="Chu M.C."/>
            <person name="Andersen G.L."/>
        </authorList>
    </citation>
    <scope>NUCLEOTIDE SEQUENCE [LARGE SCALE GENOMIC DNA]</scope>
    <source>
        <strain>Nepal516</strain>
    </source>
</reference>
<reference key="2">
    <citation type="submission" date="2009-04" db="EMBL/GenBank/DDBJ databases">
        <title>Yersinia pestis Nepal516A whole genome shotgun sequencing project.</title>
        <authorList>
            <person name="Plunkett G. III"/>
            <person name="Anderson B.D."/>
            <person name="Baumler D.J."/>
            <person name="Burland V."/>
            <person name="Cabot E.L."/>
            <person name="Glasner J.D."/>
            <person name="Mau B."/>
            <person name="Neeno-Eckwall E."/>
            <person name="Perna N.T."/>
            <person name="Munk A.C."/>
            <person name="Tapia R."/>
            <person name="Green L.D."/>
            <person name="Rogers Y.C."/>
            <person name="Detter J.C."/>
            <person name="Bruce D.C."/>
            <person name="Brettin T.S."/>
        </authorList>
    </citation>
    <scope>NUCLEOTIDE SEQUENCE [LARGE SCALE GENOMIC DNA]</scope>
    <source>
        <strain>Nepal516</strain>
    </source>
</reference>
<accession>Q1CHR0</accession>
<protein>
    <recommendedName>
        <fullName evidence="1">NADH-quinone oxidoreductase subunit K</fullName>
        <ecNumber evidence="1">7.1.1.-</ecNumber>
    </recommendedName>
    <alternativeName>
        <fullName evidence="1">NADH dehydrogenase I subunit K</fullName>
    </alternativeName>
    <alternativeName>
        <fullName evidence="1">NDH-1 subunit K</fullName>
    </alternativeName>
</protein>
<organism>
    <name type="scientific">Yersinia pestis bv. Antiqua (strain Nepal516)</name>
    <dbReference type="NCBI Taxonomy" id="377628"/>
    <lineage>
        <taxon>Bacteria</taxon>
        <taxon>Pseudomonadati</taxon>
        <taxon>Pseudomonadota</taxon>
        <taxon>Gammaproteobacteria</taxon>
        <taxon>Enterobacterales</taxon>
        <taxon>Yersiniaceae</taxon>
        <taxon>Yersinia</taxon>
    </lineage>
</organism>
<proteinExistence type="inferred from homology"/>
<keyword id="KW-0997">Cell inner membrane</keyword>
<keyword id="KW-1003">Cell membrane</keyword>
<keyword id="KW-0472">Membrane</keyword>
<keyword id="KW-0520">NAD</keyword>
<keyword id="KW-0874">Quinone</keyword>
<keyword id="KW-1278">Translocase</keyword>
<keyword id="KW-0812">Transmembrane</keyword>
<keyword id="KW-1133">Transmembrane helix</keyword>
<keyword id="KW-0813">Transport</keyword>
<keyword id="KW-0830">Ubiquinone</keyword>
<evidence type="ECO:0000255" key="1">
    <source>
        <dbReference type="HAMAP-Rule" id="MF_01456"/>
    </source>
</evidence>
<comment type="function">
    <text evidence="1">NDH-1 shuttles electrons from NADH, via FMN and iron-sulfur (Fe-S) centers, to quinones in the respiratory chain. The immediate electron acceptor for the enzyme in this species is believed to be ubiquinone. Couples the redox reaction to proton translocation (for every two electrons transferred, four hydrogen ions are translocated across the cytoplasmic membrane), and thus conserves the redox energy in a proton gradient.</text>
</comment>
<comment type="catalytic activity">
    <reaction evidence="1">
        <text>a quinone + NADH + 5 H(+)(in) = a quinol + NAD(+) + 4 H(+)(out)</text>
        <dbReference type="Rhea" id="RHEA:57888"/>
        <dbReference type="ChEBI" id="CHEBI:15378"/>
        <dbReference type="ChEBI" id="CHEBI:24646"/>
        <dbReference type="ChEBI" id="CHEBI:57540"/>
        <dbReference type="ChEBI" id="CHEBI:57945"/>
        <dbReference type="ChEBI" id="CHEBI:132124"/>
    </reaction>
</comment>
<comment type="subunit">
    <text evidence="1">NDH-1 is composed of 13 different subunits. Subunits NuoA, H, J, K, L, M, N constitute the membrane sector of the complex.</text>
</comment>
<comment type="subcellular location">
    <subcellularLocation>
        <location evidence="1">Cell inner membrane</location>
        <topology evidence="1">Multi-pass membrane protein</topology>
    </subcellularLocation>
</comment>
<comment type="similarity">
    <text evidence="1">Belongs to the complex I subunit 4L family.</text>
</comment>
<gene>
    <name evidence="1" type="primary">nuoK</name>
    <name type="ordered locus">YPN_2141</name>
    <name type="ORF">YP516_2390</name>
</gene>
<name>NUOK_YERPN</name>